<keyword id="KW-0067">ATP-binding</keyword>
<keyword id="KW-0133">Cell shape</keyword>
<keyword id="KW-0961">Cell wall biogenesis/degradation</keyword>
<keyword id="KW-0963">Cytoplasm</keyword>
<keyword id="KW-0436">Ligase</keyword>
<keyword id="KW-0460">Magnesium</keyword>
<keyword id="KW-0464">Manganese</keyword>
<keyword id="KW-0479">Metal-binding</keyword>
<keyword id="KW-0547">Nucleotide-binding</keyword>
<keyword id="KW-0573">Peptidoglycan synthesis</keyword>
<organism>
    <name type="scientific">Vibrio parahaemolyticus serotype O3:K6 (strain RIMD 2210633)</name>
    <dbReference type="NCBI Taxonomy" id="223926"/>
    <lineage>
        <taxon>Bacteria</taxon>
        <taxon>Pseudomonadati</taxon>
        <taxon>Pseudomonadota</taxon>
        <taxon>Gammaproteobacteria</taxon>
        <taxon>Vibrionales</taxon>
        <taxon>Vibrionaceae</taxon>
        <taxon>Vibrio</taxon>
    </lineage>
</organism>
<name>DDL_VIBPA</name>
<dbReference type="EC" id="6.3.2.4" evidence="2"/>
<dbReference type="EMBL" id="BA000032">
    <property type="protein sequence ID" value="BAC62229.1"/>
    <property type="molecule type" value="Genomic_DNA"/>
</dbReference>
<dbReference type="RefSeq" id="NP_800396.1">
    <property type="nucleotide sequence ID" value="NC_004605.1"/>
</dbReference>
<dbReference type="RefSeq" id="WP_005455294.1">
    <property type="nucleotide sequence ID" value="NC_004605.1"/>
</dbReference>
<dbReference type="SMR" id="Q87HS0"/>
<dbReference type="GeneID" id="1191575"/>
<dbReference type="KEGG" id="vpa:VPA0886"/>
<dbReference type="PATRIC" id="fig|223926.6.peg.3819"/>
<dbReference type="eggNOG" id="COG1181">
    <property type="taxonomic scope" value="Bacteria"/>
</dbReference>
<dbReference type="HOGENOM" id="CLU_039268_0_0_6"/>
<dbReference type="UniPathway" id="UPA00219"/>
<dbReference type="Proteomes" id="UP000002493">
    <property type="component" value="Chromosome 2"/>
</dbReference>
<dbReference type="GO" id="GO:0005829">
    <property type="term" value="C:cytosol"/>
    <property type="evidence" value="ECO:0007669"/>
    <property type="project" value="TreeGrafter"/>
</dbReference>
<dbReference type="GO" id="GO:0005524">
    <property type="term" value="F:ATP binding"/>
    <property type="evidence" value="ECO:0007669"/>
    <property type="project" value="UniProtKB-KW"/>
</dbReference>
<dbReference type="GO" id="GO:0008716">
    <property type="term" value="F:D-alanine-D-alanine ligase activity"/>
    <property type="evidence" value="ECO:0007669"/>
    <property type="project" value="UniProtKB-UniRule"/>
</dbReference>
<dbReference type="GO" id="GO:0046872">
    <property type="term" value="F:metal ion binding"/>
    <property type="evidence" value="ECO:0007669"/>
    <property type="project" value="UniProtKB-KW"/>
</dbReference>
<dbReference type="GO" id="GO:0071555">
    <property type="term" value="P:cell wall organization"/>
    <property type="evidence" value="ECO:0007669"/>
    <property type="project" value="UniProtKB-KW"/>
</dbReference>
<dbReference type="GO" id="GO:0009252">
    <property type="term" value="P:peptidoglycan biosynthetic process"/>
    <property type="evidence" value="ECO:0007669"/>
    <property type="project" value="UniProtKB-UniRule"/>
</dbReference>
<dbReference type="GO" id="GO:0008360">
    <property type="term" value="P:regulation of cell shape"/>
    <property type="evidence" value="ECO:0007669"/>
    <property type="project" value="UniProtKB-KW"/>
</dbReference>
<dbReference type="Gene3D" id="3.40.50.20">
    <property type="match status" value="1"/>
</dbReference>
<dbReference type="Gene3D" id="3.30.1490.20">
    <property type="entry name" value="ATP-grasp fold, A domain"/>
    <property type="match status" value="1"/>
</dbReference>
<dbReference type="Gene3D" id="3.30.470.20">
    <property type="entry name" value="ATP-grasp fold, B domain"/>
    <property type="match status" value="1"/>
</dbReference>
<dbReference type="HAMAP" id="MF_00047">
    <property type="entry name" value="Dala_Dala_lig"/>
    <property type="match status" value="1"/>
</dbReference>
<dbReference type="InterPro" id="IPR011761">
    <property type="entry name" value="ATP-grasp"/>
</dbReference>
<dbReference type="InterPro" id="IPR013815">
    <property type="entry name" value="ATP_grasp_subdomain_1"/>
</dbReference>
<dbReference type="InterPro" id="IPR000291">
    <property type="entry name" value="D-Ala_lig_Van_CS"/>
</dbReference>
<dbReference type="InterPro" id="IPR005905">
    <property type="entry name" value="D_ala_D_ala"/>
</dbReference>
<dbReference type="InterPro" id="IPR011095">
    <property type="entry name" value="Dala_Dala_lig_C"/>
</dbReference>
<dbReference type="InterPro" id="IPR011127">
    <property type="entry name" value="Dala_Dala_lig_N"/>
</dbReference>
<dbReference type="InterPro" id="IPR016185">
    <property type="entry name" value="PreATP-grasp_dom_sf"/>
</dbReference>
<dbReference type="NCBIfam" id="TIGR01205">
    <property type="entry name" value="D_ala_D_alaTIGR"/>
    <property type="match status" value="1"/>
</dbReference>
<dbReference type="NCBIfam" id="NF002527">
    <property type="entry name" value="PRK01966.1-3"/>
    <property type="match status" value="1"/>
</dbReference>
<dbReference type="NCBIfam" id="NF002528">
    <property type="entry name" value="PRK01966.1-4"/>
    <property type="match status" value="1"/>
</dbReference>
<dbReference type="PANTHER" id="PTHR23132">
    <property type="entry name" value="D-ALANINE--D-ALANINE LIGASE"/>
    <property type="match status" value="1"/>
</dbReference>
<dbReference type="PANTHER" id="PTHR23132:SF25">
    <property type="entry name" value="D-ALANINE--D-ALANINE LIGASE A"/>
    <property type="match status" value="1"/>
</dbReference>
<dbReference type="Pfam" id="PF07478">
    <property type="entry name" value="Dala_Dala_lig_C"/>
    <property type="match status" value="1"/>
</dbReference>
<dbReference type="Pfam" id="PF01820">
    <property type="entry name" value="Dala_Dala_lig_N"/>
    <property type="match status" value="1"/>
</dbReference>
<dbReference type="PIRSF" id="PIRSF039102">
    <property type="entry name" value="Ddl/VanB"/>
    <property type="match status" value="1"/>
</dbReference>
<dbReference type="SUPFAM" id="SSF56059">
    <property type="entry name" value="Glutathione synthetase ATP-binding domain-like"/>
    <property type="match status" value="1"/>
</dbReference>
<dbReference type="SUPFAM" id="SSF52440">
    <property type="entry name" value="PreATP-grasp domain"/>
    <property type="match status" value="1"/>
</dbReference>
<dbReference type="PROSITE" id="PS50975">
    <property type="entry name" value="ATP_GRASP"/>
    <property type="match status" value="1"/>
</dbReference>
<dbReference type="PROSITE" id="PS00843">
    <property type="entry name" value="DALA_DALA_LIGASE_1"/>
    <property type="match status" value="1"/>
</dbReference>
<dbReference type="PROSITE" id="PS00844">
    <property type="entry name" value="DALA_DALA_LIGASE_2"/>
    <property type="match status" value="1"/>
</dbReference>
<evidence type="ECO:0000250" key="1"/>
<evidence type="ECO:0000255" key="2">
    <source>
        <dbReference type="HAMAP-Rule" id="MF_00047"/>
    </source>
</evidence>
<accession>Q87HS0</accession>
<gene>
    <name evidence="2" type="primary">ddl</name>
    <name type="ordered locus">VPA0886</name>
</gene>
<feature type="chain" id="PRO_0000177902" description="D-alanine--D-alanine ligase">
    <location>
        <begin position="1"/>
        <end position="329"/>
    </location>
</feature>
<feature type="domain" description="ATP-grasp" evidence="2">
    <location>
        <begin position="120"/>
        <end position="326"/>
    </location>
</feature>
<feature type="binding site" evidence="2">
    <location>
        <begin position="150"/>
        <end position="205"/>
    </location>
    <ligand>
        <name>ATP</name>
        <dbReference type="ChEBI" id="CHEBI:30616"/>
    </ligand>
</feature>
<feature type="binding site" evidence="2">
    <location>
        <position position="280"/>
    </location>
    <ligand>
        <name>Mg(2+)</name>
        <dbReference type="ChEBI" id="CHEBI:18420"/>
        <label>1</label>
    </ligand>
</feature>
<feature type="binding site" evidence="2">
    <location>
        <position position="293"/>
    </location>
    <ligand>
        <name>Mg(2+)</name>
        <dbReference type="ChEBI" id="CHEBI:18420"/>
        <label>1</label>
    </ligand>
</feature>
<feature type="binding site" evidence="2">
    <location>
        <position position="293"/>
    </location>
    <ligand>
        <name>Mg(2+)</name>
        <dbReference type="ChEBI" id="CHEBI:18420"/>
        <label>2</label>
    </ligand>
</feature>
<feature type="binding site" evidence="2">
    <location>
        <position position="295"/>
    </location>
    <ligand>
        <name>Mg(2+)</name>
        <dbReference type="ChEBI" id="CHEBI:18420"/>
        <label>2</label>
    </ligand>
</feature>
<sequence>MIKNILLLCGGGSSEHEISLLSANFVEQQLNLIQNVKVTRVEIKNEGWVTDQGELVYLDLNTKQLCSNESNQTIDFIVPCIHGFPGETGDIQSLFEIAGIPYLGCGPEASSNSFNKITSKLWYDALDIPNTPYLFLTRNDEHAHRQAEQAFEKWGKVFVKAARQGSSVGCYSVAEKQAIAKAVNDAFGYSDQVLVEKAVKPRELEVAAYEMNGELHITKPGEVIAPDGAFYSYDEKYSSSSHSLTEVEAKNLTQEQIDKIRHASETVFKQMNLRHLSRIDFFLTEDNEIYLNEVNTFPGMTPISMFPKMLQNNGHKFHEFLEDCINSAK</sequence>
<proteinExistence type="inferred from homology"/>
<comment type="function">
    <text evidence="2">Cell wall formation.</text>
</comment>
<comment type="catalytic activity">
    <reaction evidence="2">
        <text>2 D-alanine + ATP = D-alanyl-D-alanine + ADP + phosphate + H(+)</text>
        <dbReference type="Rhea" id="RHEA:11224"/>
        <dbReference type="ChEBI" id="CHEBI:15378"/>
        <dbReference type="ChEBI" id="CHEBI:30616"/>
        <dbReference type="ChEBI" id="CHEBI:43474"/>
        <dbReference type="ChEBI" id="CHEBI:57416"/>
        <dbReference type="ChEBI" id="CHEBI:57822"/>
        <dbReference type="ChEBI" id="CHEBI:456216"/>
        <dbReference type="EC" id="6.3.2.4"/>
    </reaction>
</comment>
<comment type="cofactor">
    <cofactor evidence="1">
        <name>Mg(2+)</name>
        <dbReference type="ChEBI" id="CHEBI:18420"/>
    </cofactor>
    <cofactor evidence="1">
        <name>Mn(2+)</name>
        <dbReference type="ChEBI" id="CHEBI:29035"/>
    </cofactor>
    <text evidence="1">Binds 2 magnesium or manganese ions per subunit.</text>
</comment>
<comment type="pathway">
    <text evidence="2">Cell wall biogenesis; peptidoglycan biosynthesis.</text>
</comment>
<comment type="subcellular location">
    <subcellularLocation>
        <location evidence="2">Cytoplasm</location>
    </subcellularLocation>
</comment>
<comment type="similarity">
    <text evidence="2">Belongs to the D-alanine--D-alanine ligase family.</text>
</comment>
<reference key="1">
    <citation type="journal article" date="2003" name="Lancet">
        <title>Genome sequence of Vibrio parahaemolyticus: a pathogenic mechanism distinct from that of V. cholerae.</title>
        <authorList>
            <person name="Makino K."/>
            <person name="Oshima K."/>
            <person name="Kurokawa K."/>
            <person name="Yokoyama K."/>
            <person name="Uda T."/>
            <person name="Tagomori K."/>
            <person name="Iijima Y."/>
            <person name="Najima M."/>
            <person name="Nakano M."/>
            <person name="Yamashita A."/>
            <person name="Kubota Y."/>
            <person name="Kimura S."/>
            <person name="Yasunaga T."/>
            <person name="Honda T."/>
            <person name="Shinagawa H."/>
            <person name="Hattori M."/>
            <person name="Iida T."/>
        </authorList>
    </citation>
    <scope>NUCLEOTIDE SEQUENCE [LARGE SCALE GENOMIC DNA]</scope>
    <source>
        <strain>RIMD 2210633</strain>
    </source>
</reference>
<protein>
    <recommendedName>
        <fullName evidence="2">D-alanine--D-alanine ligase</fullName>
        <ecNumber evidence="2">6.3.2.4</ecNumber>
    </recommendedName>
    <alternativeName>
        <fullName evidence="2">D-Ala-D-Ala ligase</fullName>
    </alternativeName>
    <alternativeName>
        <fullName evidence="2">D-alanylalanine synthetase</fullName>
    </alternativeName>
</protein>